<name>LOLD_BRUAB</name>
<reference key="1">
    <citation type="journal article" date="2005" name="J. Bacteriol.">
        <title>Completion of the genome sequence of Brucella abortus and comparison to the highly similar genomes of Brucella melitensis and Brucella suis.</title>
        <authorList>
            <person name="Halling S.M."/>
            <person name="Peterson-Burch B.D."/>
            <person name="Bricker B.J."/>
            <person name="Zuerner R.L."/>
            <person name="Qing Z."/>
            <person name="Li L.-L."/>
            <person name="Kapur V."/>
            <person name="Alt D.P."/>
            <person name="Olsen S.C."/>
        </authorList>
    </citation>
    <scope>NUCLEOTIDE SEQUENCE [LARGE SCALE GENOMIC DNA]</scope>
    <source>
        <strain>9-941</strain>
    </source>
</reference>
<dbReference type="EC" id="7.6.2.-" evidence="1"/>
<dbReference type="EMBL" id="AE017223">
    <property type="protein sequence ID" value="AAX74205.1"/>
    <property type="molecule type" value="Genomic_DNA"/>
</dbReference>
<dbReference type="RefSeq" id="WP_002963957.1">
    <property type="nucleotide sequence ID" value="NC_006932.1"/>
</dbReference>
<dbReference type="SMR" id="Q57DS9"/>
<dbReference type="EnsemblBacteria" id="AAX74205">
    <property type="protein sequence ID" value="AAX74205"/>
    <property type="gene ID" value="BruAb1_0838"/>
</dbReference>
<dbReference type="KEGG" id="bmb:BruAb1_0838"/>
<dbReference type="HOGENOM" id="CLU_000604_1_22_5"/>
<dbReference type="Proteomes" id="UP000000540">
    <property type="component" value="Chromosome I"/>
</dbReference>
<dbReference type="GO" id="GO:0005886">
    <property type="term" value="C:plasma membrane"/>
    <property type="evidence" value="ECO:0007669"/>
    <property type="project" value="UniProtKB-SubCell"/>
</dbReference>
<dbReference type="GO" id="GO:0005524">
    <property type="term" value="F:ATP binding"/>
    <property type="evidence" value="ECO:0007669"/>
    <property type="project" value="UniProtKB-KW"/>
</dbReference>
<dbReference type="GO" id="GO:0016887">
    <property type="term" value="F:ATP hydrolysis activity"/>
    <property type="evidence" value="ECO:0007669"/>
    <property type="project" value="InterPro"/>
</dbReference>
<dbReference type="GO" id="GO:0022857">
    <property type="term" value="F:transmembrane transporter activity"/>
    <property type="evidence" value="ECO:0007669"/>
    <property type="project" value="TreeGrafter"/>
</dbReference>
<dbReference type="GO" id="GO:0044874">
    <property type="term" value="P:lipoprotein localization to outer membrane"/>
    <property type="evidence" value="ECO:0007669"/>
    <property type="project" value="TreeGrafter"/>
</dbReference>
<dbReference type="GO" id="GO:0089705">
    <property type="term" value="P:protein localization to outer membrane"/>
    <property type="evidence" value="ECO:0007669"/>
    <property type="project" value="TreeGrafter"/>
</dbReference>
<dbReference type="CDD" id="cd03255">
    <property type="entry name" value="ABC_MJ0796_LolCDE_FtsE"/>
    <property type="match status" value="1"/>
</dbReference>
<dbReference type="FunFam" id="3.40.50.300:FF:000032">
    <property type="entry name" value="Export ABC transporter ATP-binding protein"/>
    <property type="match status" value="1"/>
</dbReference>
<dbReference type="Gene3D" id="3.40.50.300">
    <property type="entry name" value="P-loop containing nucleotide triphosphate hydrolases"/>
    <property type="match status" value="1"/>
</dbReference>
<dbReference type="InterPro" id="IPR003593">
    <property type="entry name" value="AAA+_ATPase"/>
</dbReference>
<dbReference type="InterPro" id="IPR003439">
    <property type="entry name" value="ABC_transporter-like_ATP-bd"/>
</dbReference>
<dbReference type="InterPro" id="IPR017871">
    <property type="entry name" value="ABC_transporter-like_CS"/>
</dbReference>
<dbReference type="InterPro" id="IPR015854">
    <property type="entry name" value="ABC_transpr_LolD-like"/>
</dbReference>
<dbReference type="InterPro" id="IPR017911">
    <property type="entry name" value="MacB-like_ATP-bd"/>
</dbReference>
<dbReference type="InterPro" id="IPR027417">
    <property type="entry name" value="P-loop_NTPase"/>
</dbReference>
<dbReference type="PANTHER" id="PTHR24220">
    <property type="entry name" value="IMPORT ATP-BINDING PROTEIN"/>
    <property type="match status" value="1"/>
</dbReference>
<dbReference type="PANTHER" id="PTHR24220:SF689">
    <property type="entry name" value="LIPOPROTEIN-RELEASING SYSTEM ATP-BINDING PROTEIN LOLD"/>
    <property type="match status" value="1"/>
</dbReference>
<dbReference type="Pfam" id="PF00005">
    <property type="entry name" value="ABC_tran"/>
    <property type="match status" value="1"/>
</dbReference>
<dbReference type="SMART" id="SM00382">
    <property type="entry name" value="AAA"/>
    <property type="match status" value="1"/>
</dbReference>
<dbReference type="SUPFAM" id="SSF52540">
    <property type="entry name" value="P-loop containing nucleoside triphosphate hydrolases"/>
    <property type="match status" value="1"/>
</dbReference>
<dbReference type="PROSITE" id="PS00211">
    <property type="entry name" value="ABC_TRANSPORTER_1"/>
    <property type="match status" value="1"/>
</dbReference>
<dbReference type="PROSITE" id="PS50893">
    <property type="entry name" value="ABC_TRANSPORTER_2"/>
    <property type="match status" value="1"/>
</dbReference>
<dbReference type="PROSITE" id="PS51244">
    <property type="entry name" value="LOLD"/>
    <property type="match status" value="1"/>
</dbReference>
<keyword id="KW-0067">ATP-binding</keyword>
<keyword id="KW-0997">Cell inner membrane</keyword>
<keyword id="KW-1003">Cell membrane</keyword>
<keyword id="KW-0472">Membrane</keyword>
<keyword id="KW-0547">Nucleotide-binding</keyword>
<keyword id="KW-1278">Translocase</keyword>
<keyword id="KW-0813">Transport</keyword>
<accession>Q57DS9</accession>
<gene>
    <name evidence="1" type="primary">lolD</name>
    <name type="ordered locus">BruAb1_0838</name>
</gene>
<sequence>MAAEIILRLERIGRAYKEADRELIILNDADFTLRRGEMVALVAPSGAGKSTLLHTAGLLERPDSGDVVLDGRSCSKLSDDERTAVRRNDVGFVYQFHHLLPEFSALENVMLPQMIRGLSRKAAAERAQQLLEYMKIGKRASHRPAELSGGEQQRVAIARAVANAPLVLLADEPTGNLDPTTSSYVFGALEALVRQSGLAALIATHNHELARRMDRRVTLKDGRVVDL</sequence>
<organism>
    <name type="scientific">Brucella abortus biovar 1 (strain 9-941)</name>
    <dbReference type="NCBI Taxonomy" id="262698"/>
    <lineage>
        <taxon>Bacteria</taxon>
        <taxon>Pseudomonadati</taxon>
        <taxon>Pseudomonadota</taxon>
        <taxon>Alphaproteobacteria</taxon>
        <taxon>Hyphomicrobiales</taxon>
        <taxon>Brucellaceae</taxon>
        <taxon>Brucella/Ochrobactrum group</taxon>
        <taxon>Brucella</taxon>
    </lineage>
</organism>
<feature type="chain" id="PRO_0000260194" description="Lipoprotein-releasing system ATP-binding protein LolD">
    <location>
        <begin position="1"/>
        <end position="227"/>
    </location>
</feature>
<feature type="domain" description="ABC transporter" evidence="1">
    <location>
        <begin position="7"/>
        <end position="227"/>
    </location>
</feature>
<feature type="binding site" evidence="1">
    <location>
        <begin position="43"/>
        <end position="50"/>
    </location>
    <ligand>
        <name>ATP</name>
        <dbReference type="ChEBI" id="CHEBI:30616"/>
    </ligand>
</feature>
<comment type="function">
    <text evidence="1">Part of the ABC transporter complex LolCDE involved in the translocation of mature outer membrane-directed lipoproteins, from the inner membrane to the periplasmic chaperone, LolA. Responsible for the formation of the LolA-lipoprotein complex in an ATP-dependent manner.</text>
</comment>
<comment type="subunit">
    <text evidence="1">The complex is composed of two ATP-binding proteins (LolD) and two transmembrane proteins (LolC and LolE).</text>
</comment>
<comment type="subcellular location">
    <subcellularLocation>
        <location evidence="1">Cell inner membrane</location>
        <topology evidence="1">Peripheral membrane protein</topology>
    </subcellularLocation>
</comment>
<comment type="similarity">
    <text evidence="1">Belongs to the ABC transporter superfamily. Lipoprotein translocase (TC 3.A.1.125) family.</text>
</comment>
<evidence type="ECO:0000255" key="1">
    <source>
        <dbReference type="HAMAP-Rule" id="MF_01708"/>
    </source>
</evidence>
<proteinExistence type="inferred from homology"/>
<protein>
    <recommendedName>
        <fullName evidence="1">Lipoprotein-releasing system ATP-binding protein LolD</fullName>
        <ecNumber evidence="1">7.6.2.-</ecNumber>
    </recommendedName>
</protein>